<comment type="function">
    <text>Capsid protein which self-assembles to form the inner icosahedral capsid with a T=2 symmetry, and consisting of 60 P3 dimers.</text>
</comment>
<comment type="subunit">
    <text evidence="1">Homodimer. Homomultimer.</text>
</comment>
<comment type="subcellular location">
    <subcellularLocation>
        <location evidence="3">Virion</location>
    </subcellularLocation>
    <subcellularLocation>
        <location evidence="2">Host cytoplasm</location>
    </subcellularLocation>
    <text>Found in the interior of spherical cytoplasmic structures, called virus factories, that appear early after infection and are the site of viral replication and packaging.</text>
</comment>
<comment type="similarity">
    <text evidence="3">Belongs to the phytoreovirus inner capsid protein P3 family.</text>
</comment>
<sequence length="1019" mass="114104">MDSTGRAYDGASEFKSVLVTEGTSHYTPVEVYNILDELKTIKITSTIAEQSVVSRTPIPLSKIGLSDVKKLFDINVIKCGSSLRIVDEPQVTFIVSYAKDIYDKFMCIEHDSAYEPSLTMHRVRVIYSMLNDYCAKMISEVPYESSFVGELPVKSVTLNKLGDRNMDALAEHLLFEQDVVNAQRENRIFYQRKSAPAVPVTFGDDLEPAVRERANLYHRYSVPYHQIELALHALANDLLSIQYCHPTVVYNYLSSRAPNFLRLDDQVSLKLTSAGIGTLMPRPVVQLLDYDLVYMSPLALNNLASRLLRKISLHLVMQMVTAVQQDLGEVVSVSSNVTNPASACLVRMNVQGVQTLAVFIAQSMLNPNISYGMLSGLTLDCFSNFIYGACLMLFQALIPPSALTARQRLDINNRFAYFLIKCHATQATTASVVPNQVIYPVDAIDQWQSNRRDVLVAIYNNLLPGELVLSNLIQTYFRGNTAQQAAEILIPADQTSYGANETRALSAPYLFGAPINMLAPDARLSTYKRDLALPDRSPILITTVEGQNSISIEILRHKTGLIRAMYLNGFVTQPPAWIRNANSNTALLSRFLDVTPNLLGIYEAILANTYANAVNVYCDSVYRADIPTEWKLHQSVDPQDLLFGVFGIVPQYQILNEAVPDFFAGGEDILILQLIRAVYDTLSNKLGRNPADIFHLDEVFKVIEEIVSVLVQQKVDARKYFTESMRSGSFSKPRWDNFLRRPVAQRLPNLDSVIMTQADHVYNYMTQLTHIIPITDCFYIVKNSGFVDRGSTGPVMASSSVYENVLKVVHTIADFEAANALRLQRRSVDNTSYTDSLSDMFNGLRSISSSEFVRSVNGRSVFTEGRIDAIKVNMRVKFDLQFITEEGGYSKPPNVKKLMFSDFLSFLDSHKSDYRPPLLTVPITIGLNNLGETNSNTLRMRSEAIDEYFSSYVGAQILVPINVVDTRVYTEFSELRNFFTGDVVITDDPFDVWDGVKATYIPIGVHGVRLDPNGDQPPL</sequence>
<name>P3_RDVF</name>
<feature type="chain" id="PRO_0000222783" description="Outer capsid protein P3">
    <location>
        <begin position="1"/>
        <end position="1019"/>
    </location>
</feature>
<organism>
    <name type="scientific">Rice dwarf virus (isolate Fujian)</name>
    <name type="common">RDV</name>
    <dbReference type="NCBI Taxonomy" id="142804"/>
    <lineage>
        <taxon>Viruses</taxon>
        <taxon>Riboviria</taxon>
        <taxon>Orthornavirae</taxon>
        <taxon>Duplornaviricota</taxon>
        <taxon>Resentoviricetes</taxon>
        <taxon>Reovirales</taxon>
        <taxon>Sedoreoviridae</taxon>
        <taxon>Phytoreovirus</taxon>
        <taxon>Rice dwarf virus</taxon>
    </lineage>
</organism>
<accession>Q98630</accession>
<organismHost>
    <name type="scientific">Alopecurus aequalis</name>
    <dbReference type="NCBI Taxonomy" id="114194"/>
</organismHost>
<organismHost>
    <name type="scientific">Echinochloa crus-galli</name>
    <name type="common">Barnyard grass</name>
    <name type="synonym">Panicum crus-galli</name>
    <dbReference type="NCBI Taxonomy" id="90397"/>
</organismHost>
<organismHost>
    <name type="scientific">Nephotettix cincticeps</name>
    <name type="common">Green rice leafhopper</name>
    <name type="synonym">Selenocephalus cincticeps</name>
    <dbReference type="NCBI Taxonomy" id="94400"/>
</organismHost>
<organismHost>
    <name type="scientific">Oryza sativa</name>
    <name type="common">Rice</name>
    <dbReference type="NCBI Taxonomy" id="4530"/>
</organismHost>
<organismHost>
    <name type="scientific">Paspalum</name>
    <dbReference type="NCBI Taxonomy" id="147271"/>
</organismHost>
<proteinExistence type="inferred from homology"/>
<protein>
    <recommendedName>
        <fullName>Outer capsid protein P3</fullName>
    </recommendedName>
    <alternativeName>
        <fullName>Core protein P3</fullName>
    </alternativeName>
</protein>
<evidence type="ECO:0000250" key="1"/>
<evidence type="ECO:0000269" key="2">
    <source>
    </source>
</evidence>
<evidence type="ECO:0000305" key="3"/>
<dbReference type="EMBL" id="U72757">
    <property type="protein sequence ID" value="AAB17618.1"/>
    <property type="molecule type" value="Genomic_RNA"/>
</dbReference>
<dbReference type="RefSeq" id="NP_620543.1">
    <property type="nucleotide sequence ID" value="NC_003772.1"/>
</dbReference>
<dbReference type="SMR" id="Q98630"/>
<dbReference type="GeneID" id="956504"/>
<dbReference type="KEGG" id="vg:956504"/>
<dbReference type="Proteomes" id="UP000002239">
    <property type="component" value="Genome"/>
</dbReference>
<dbReference type="GO" id="GO:0030430">
    <property type="term" value="C:host cell cytoplasm"/>
    <property type="evidence" value="ECO:0007669"/>
    <property type="project" value="UniProtKB-SubCell"/>
</dbReference>
<dbReference type="GO" id="GO:0039624">
    <property type="term" value="C:viral outer capsid"/>
    <property type="evidence" value="ECO:0007669"/>
    <property type="project" value="UniProtKB-KW"/>
</dbReference>
<dbReference type="GO" id="GO:0005198">
    <property type="term" value="F:structural molecule activity"/>
    <property type="evidence" value="ECO:0007669"/>
    <property type="project" value="InterPro"/>
</dbReference>
<dbReference type="InterPro" id="IPR016029">
    <property type="entry name" value="Inner_layer_core_VP3_Reovir"/>
</dbReference>
<dbReference type="InterPro" id="IPR015312">
    <property type="entry name" value="Innr_layr_core_VP3_Phytoreovir"/>
</dbReference>
<dbReference type="Pfam" id="PF09231">
    <property type="entry name" value="RDV-p3"/>
    <property type="match status" value="1"/>
</dbReference>
<dbReference type="SUPFAM" id="SSF56831">
    <property type="entry name" value="Reovirus inner layer core protein p3"/>
    <property type="match status" value="1"/>
</dbReference>
<keyword id="KW-0167">Capsid protein</keyword>
<keyword id="KW-1035">Host cytoplasm</keyword>
<keyword id="KW-1152">Outer capsid protein</keyword>
<keyword id="KW-1185">Reference proteome</keyword>
<keyword id="KW-0946">Virion</keyword>
<reference key="1">
    <citation type="journal article" date="1997" name="Acta Virol.">
        <title>Molecular cloning, sequencing, functional analysis and expression in E.coli of major core protein gene (S3) of rice dwarf virus Chinese isolate.</title>
        <authorList>
            <person name="Zhang F."/>
            <person name="Li Y."/>
            <person name="Liu Y."/>
            <person name="An C."/>
            <person name="Chen Z."/>
        </authorList>
    </citation>
    <scope>NUCLEOTIDE SEQUENCE [GENOMIC RNA]</scope>
</reference>
<reference key="2">
    <citation type="journal article" date="2006" name="J. Gen. Virol.">
        <title>Pns12 protein of Rice dwarf virus is essential for formation of viroplasms and nucleation of viral-assembly complexes.</title>
        <authorList>
            <person name="Wei T."/>
            <person name="Shimizu T."/>
            <person name="Hagiwara K."/>
            <person name="Kikuchi A."/>
            <person name="Moriyasu Y."/>
            <person name="Suzuki N."/>
            <person name="Chen H."/>
            <person name="Omura T."/>
        </authorList>
    </citation>
    <scope>SUBCELLULAR LOCATION</scope>
</reference>